<proteinExistence type="inferred from homology"/>
<feature type="chain" id="PRO_1000094587" description="3-dehydroquinate synthase">
    <location>
        <begin position="1"/>
        <end position="381"/>
    </location>
</feature>
<feature type="binding site" evidence="1">
    <location>
        <begin position="81"/>
        <end position="86"/>
    </location>
    <ligand>
        <name>NAD(+)</name>
        <dbReference type="ChEBI" id="CHEBI:57540"/>
    </ligand>
</feature>
<feature type="binding site" evidence="1">
    <location>
        <begin position="115"/>
        <end position="119"/>
    </location>
    <ligand>
        <name>NAD(+)</name>
        <dbReference type="ChEBI" id="CHEBI:57540"/>
    </ligand>
</feature>
<feature type="binding site" evidence="1">
    <location>
        <begin position="139"/>
        <end position="140"/>
    </location>
    <ligand>
        <name>NAD(+)</name>
        <dbReference type="ChEBI" id="CHEBI:57540"/>
    </ligand>
</feature>
<feature type="binding site" evidence="1">
    <location>
        <position position="152"/>
    </location>
    <ligand>
        <name>NAD(+)</name>
        <dbReference type="ChEBI" id="CHEBI:57540"/>
    </ligand>
</feature>
<feature type="binding site" evidence="1">
    <location>
        <position position="161"/>
    </location>
    <ligand>
        <name>NAD(+)</name>
        <dbReference type="ChEBI" id="CHEBI:57540"/>
    </ligand>
</feature>
<feature type="binding site" evidence="1">
    <location>
        <position position="194"/>
    </location>
    <ligand>
        <name>Zn(2+)</name>
        <dbReference type="ChEBI" id="CHEBI:29105"/>
    </ligand>
</feature>
<feature type="binding site" evidence="1">
    <location>
        <position position="256"/>
    </location>
    <ligand>
        <name>Zn(2+)</name>
        <dbReference type="ChEBI" id="CHEBI:29105"/>
    </ligand>
</feature>
<feature type="binding site" evidence="1">
    <location>
        <position position="274"/>
    </location>
    <ligand>
        <name>Zn(2+)</name>
        <dbReference type="ChEBI" id="CHEBI:29105"/>
    </ligand>
</feature>
<comment type="function">
    <text evidence="1">Catalyzes the conversion of 3-deoxy-D-arabino-heptulosonate 7-phosphate (DAHP) to dehydroquinate (DHQ).</text>
</comment>
<comment type="catalytic activity">
    <reaction evidence="1">
        <text>7-phospho-2-dehydro-3-deoxy-D-arabino-heptonate = 3-dehydroquinate + phosphate</text>
        <dbReference type="Rhea" id="RHEA:21968"/>
        <dbReference type="ChEBI" id="CHEBI:32364"/>
        <dbReference type="ChEBI" id="CHEBI:43474"/>
        <dbReference type="ChEBI" id="CHEBI:58394"/>
        <dbReference type="EC" id="4.2.3.4"/>
    </reaction>
</comment>
<comment type="cofactor">
    <cofactor evidence="1">
        <name>Co(2+)</name>
        <dbReference type="ChEBI" id="CHEBI:48828"/>
    </cofactor>
    <cofactor evidence="1">
        <name>Zn(2+)</name>
        <dbReference type="ChEBI" id="CHEBI:29105"/>
    </cofactor>
    <text evidence="1">Binds 1 divalent metal cation per subunit. Can use either Co(2+) or Zn(2+).</text>
</comment>
<comment type="cofactor">
    <cofactor evidence="1">
        <name>NAD(+)</name>
        <dbReference type="ChEBI" id="CHEBI:57540"/>
    </cofactor>
</comment>
<comment type="pathway">
    <text evidence="1">Metabolic intermediate biosynthesis; chorismate biosynthesis; chorismate from D-erythrose 4-phosphate and phosphoenolpyruvate: step 2/7.</text>
</comment>
<comment type="subcellular location">
    <subcellularLocation>
        <location evidence="1">Cytoplasm</location>
    </subcellularLocation>
</comment>
<comment type="similarity">
    <text evidence="1">Belongs to the sugar phosphate cyclases superfamily. Dehydroquinate synthase family.</text>
</comment>
<sequence length="381" mass="40392">MNAPQKHSAPITVEVALGDRAYEIVIGRDVIASLGERIAKLRPGARTAIVTDRTVAKTWLKRTEEVLDQVGIAHASVIVGEGESSKSYAGLEQVCEALIAAKIERNDLVIALGGGVIGDLAGFSASLLRRGVDFVQVPTSLLAQVDSSVGGKTGINSPQGKNLIGTFHQPVLVLADTAILDTLSPRQFRAGYAEVAKYGALGDEAFFAWLEANHAELFSGGAAREHAVATSCRAKAAIVARDERETGDRALLNLGHTFGHALEAATGFSDRLFHGEGVAIGMVLAAEFSAERGMMPAADAQRLAKHLADVGLPTRLQDIAGFTQEGLADADRLMALMSQDKKVKRGELTFILMEGIGRAVIANKVEPAPVRDFLQRKLAQA</sequence>
<reference key="1">
    <citation type="submission" date="2008-05" db="EMBL/GenBank/DDBJ databases">
        <title>Complete sequence of Rhodopseudomonas palustris TIE-1.</title>
        <authorList>
            <consortium name="US DOE Joint Genome Institute"/>
            <person name="Lucas S."/>
            <person name="Copeland A."/>
            <person name="Lapidus A."/>
            <person name="Glavina del Rio T."/>
            <person name="Dalin E."/>
            <person name="Tice H."/>
            <person name="Pitluck S."/>
            <person name="Chain P."/>
            <person name="Malfatti S."/>
            <person name="Shin M."/>
            <person name="Vergez L."/>
            <person name="Lang D."/>
            <person name="Schmutz J."/>
            <person name="Larimer F."/>
            <person name="Land M."/>
            <person name="Hauser L."/>
            <person name="Kyrpides N."/>
            <person name="Mikhailova N."/>
            <person name="Emerson D."/>
            <person name="Newman D.K."/>
            <person name="Roden E."/>
            <person name="Richardson P."/>
        </authorList>
    </citation>
    <scope>NUCLEOTIDE SEQUENCE [LARGE SCALE GENOMIC DNA]</scope>
    <source>
        <strain>TIE-1</strain>
    </source>
</reference>
<evidence type="ECO:0000255" key="1">
    <source>
        <dbReference type="HAMAP-Rule" id="MF_00110"/>
    </source>
</evidence>
<name>AROB_RHOPT</name>
<protein>
    <recommendedName>
        <fullName evidence="1">3-dehydroquinate synthase</fullName>
        <shortName evidence="1">DHQS</shortName>
        <ecNumber evidence="1">4.2.3.4</ecNumber>
    </recommendedName>
</protein>
<accession>B3QAH7</accession>
<gene>
    <name evidence="1" type="primary">aroB</name>
    <name type="ordered locus">Rpal_0504</name>
</gene>
<keyword id="KW-0028">Amino-acid biosynthesis</keyword>
<keyword id="KW-0057">Aromatic amino acid biosynthesis</keyword>
<keyword id="KW-0170">Cobalt</keyword>
<keyword id="KW-0963">Cytoplasm</keyword>
<keyword id="KW-0456">Lyase</keyword>
<keyword id="KW-0479">Metal-binding</keyword>
<keyword id="KW-0520">NAD</keyword>
<keyword id="KW-0547">Nucleotide-binding</keyword>
<keyword id="KW-0862">Zinc</keyword>
<organism>
    <name type="scientific">Rhodopseudomonas palustris (strain TIE-1)</name>
    <dbReference type="NCBI Taxonomy" id="395960"/>
    <lineage>
        <taxon>Bacteria</taxon>
        <taxon>Pseudomonadati</taxon>
        <taxon>Pseudomonadota</taxon>
        <taxon>Alphaproteobacteria</taxon>
        <taxon>Hyphomicrobiales</taxon>
        <taxon>Nitrobacteraceae</taxon>
        <taxon>Rhodopseudomonas</taxon>
    </lineage>
</organism>
<dbReference type="EC" id="4.2.3.4" evidence="1"/>
<dbReference type="EMBL" id="CP001096">
    <property type="protein sequence ID" value="ACE99063.1"/>
    <property type="molecule type" value="Genomic_DNA"/>
</dbReference>
<dbReference type="RefSeq" id="WP_012494202.1">
    <property type="nucleotide sequence ID" value="NC_011004.1"/>
</dbReference>
<dbReference type="SMR" id="B3QAH7"/>
<dbReference type="KEGG" id="rpt:Rpal_0504"/>
<dbReference type="HOGENOM" id="CLU_001201_0_2_5"/>
<dbReference type="OrthoDB" id="9806583at2"/>
<dbReference type="UniPathway" id="UPA00053">
    <property type="reaction ID" value="UER00085"/>
</dbReference>
<dbReference type="Proteomes" id="UP000001725">
    <property type="component" value="Chromosome"/>
</dbReference>
<dbReference type="GO" id="GO:0005737">
    <property type="term" value="C:cytoplasm"/>
    <property type="evidence" value="ECO:0007669"/>
    <property type="project" value="UniProtKB-SubCell"/>
</dbReference>
<dbReference type="GO" id="GO:0003856">
    <property type="term" value="F:3-dehydroquinate synthase activity"/>
    <property type="evidence" value="ECO:0007669"/>
    <property type="project" value="UniProtKB-UniRule"/>
</dbReference>
<dbReference type="GO" id="GO:0046872">
    <property type="term" value="F:metal ion binding"/>
    <property type="evidence" value="ECO:0007669"/>
    <property type="project" value="UniProtKB-KW"/>
</dbReference>
<dbReference type="GO" id="GO:0000166">
    <property type="term" value="F:nucleotide binding"/>
    <property type="evidence" value="ECO:0007669"/>
    <property type="project" value="UniProtKB-KW"/>
</dbReference>
<dbReference type="GO" id="GO:0008652">
    <property type="term" value="P:amino acid biosynthetic process"/>
    <property type="evidence" value="ECO:0007669"/>
    <property type="project" value="UniProtKB-KW"/>
</dbReference>
<dbReference type="GO" id="GO:0009073">
    <property type="term" value="P:aromatic amino acid family biosynthetic process"/>
    <property type="evidence" value="ECO:0007669"/>
    <property type="project" value="UniProtKB-KW"/>
</dbReference>
<dbReference type="GO" id="GO:0009423">
    <property type="term" value="P:chorismate biosynthetic process"/>
    <property type="evidence" value="ECO:0007669"/>
    <property type="project" value="UniProtKB-UniRule"/>
</dbReference>
<dbReference type="CDD" id="cd08195">
    <property type="entry name" value="DHQS"/>
    <property type="match status" value="1"/>
</dbReference>
<dbReference type="FunFam" id="3.40.50.1970:FF:000001">
    <property type="entry name" value="3-dehydroquinate synthase"/>
    <property type="match status" value="1"/>
</dbReference>
<dbReference type="Gene3D" id="3.40.50.1970">
    <property type="match status" value="1"/>
</dbReference>
<dbReference type="Gene3D" id="1.20.1090.10">
    <property type="entry name" value="Dehydroquinate synthase-like - alpha domain"/>
    <property type="match status" value="1"/>
</dbReference>
<dbReference type="HAMAP" id="MF_00110">
    <property type="entry name" value="DHQ_synthase"/>
    <property type="match status" value="1"/>
</dbReference>
<dbReference type="InterPro" id="IPR050071">
    <property type="entry name" value="Dehydroquinate_synthase"/>
</dbReference>
<dbReference type="InterPro" id="IPR016037">
    <property type="entry name" value="DHQ_synth_AroB"/>
</dbReference>
<dbReference type="InterPro" id="IPR030963">
    <property type="entry name" value="DHQ_synth_fam"/>
</dbReference>
<dbReference type="InterPro" id="IPR030960">
    <property type="entry name" value="DHQS/DOIS_N"/>
</dbReference>
<dbReference type="InterPro" id="IPR056179">
    <property type="entry name" value="DHQS_C"/>
</dbReference>
<dbReference type="NCBIfam" id="TIGR01357">
    <property type="entry name" value="aroB"/>
    <property type="match status" value="1"/>
</dbReference>
<dbReference type="PANTHER" id="PTHR43622">
    <property type="entry name" value="3-DEHYDROQUINATE SYNTHASE"/>
    <property type="match status" value="1"/>
</dbReference>
<dbReference type="PANTHER" id="PTHR43622:SF7">
    <property type="entry name" value="3-DEHYDROQUINATE SYNTHASE, CHLOROPLASTIC"/>
    <property type="match status" value="1"/>
</dbReference>
<dbReference type="Pfam" id="PF01761">
    <property type="entry name" value="DHQ_synthase"/>
    <property type="match status" value="1"/>
</dbReference>
<dbReference type="Pfam" id="PF24621">
    <property type="entry name" value="DHQS_C"/>
    <property type="match status" value="1"/>
</dbReference>
<dbReference type="PIRSF" id="PIRSF001455">
    <property type="entry name" value="DHQ_synth"/>
    <property type="match status" value="1"/>
</dbReference>
<dbReference type="SUPFAM" id="SSF56796">
    <property type="entry name" value="Dehydroquinate synthase-like"/>
    <property type="match status" value="1"/>
</dbReference>